<accession>Q65QT7</accession>
<reference key="1">
    <citation type="journal article" date="2004" name="Nat. Biotechnol.">
        <title>The genome sequence of the capnophilic rumen bacterium Mannheimia succiniciproducens.</title>
        <authorList>
            <person name="Hong S.H."/>
            <person name="Kim J.S."/>
            <person name="Lee S.Y."/>
            <person name="In Y.H."/>
            <person name="Choi S.S."/>
            <person name="Rih J.-K."/>
            <person name="Kim C.H."/>
            <person name="Jeong H."/>
            <person name="Hur C.G."/>
            <person name="Kim J.J."/>
        </authorList>
    </citation>
    <scope>NUCLEOTIDE SEQUENCE [LARGE SCALE GENOMIC DNA]</scope>
    <source>
        <strain>KCTC 0769BP / MBEL55E</strain>
    </source>
</reference>
<gene>
    <name evidence="1" type="primary">lamB</name>
    <name type="ordered locus">MS2066</name>
</gene>
<name>LAMB_MANSM</name>
<dbReference type="EMBL" id="AE016827">
    <property type="protein sequence ID" value="AAU38673.1"/>
    <property type="molecule type" value="Genomic_DNA"/>
</dbReference>
<dbReference type="RefSeq" id="WP_011201221.1">
    <property type="nucleotide sequence ID" value="NC_006300.1"/>
</dbReference>
<dbReference type="SMR" id="Q65QT7"/>
<dbReference type="STRING" id="221988.MS2066"/>
<dbReference type="KEGG" id="msu:MS2066"/>
<dbReference type="eggNOG" id="COG4580">
    <property type="taxonomic scope" value="Bacteria"/>
</dbReference>
<dbReference type="HOGENOM" id="CLU_032473_4_1_6"/>
<dbReference type="OrthoDB" id="106611at2"/>
<dbReference type="Proteomes" id="UP000000607">
    <property type="component" value="Chromosome"/>
</dbReference>
<dbReference type="GO" id="GO:0009279">
    <property type="term" value="C:cell outer membrane"/>
    <property type="evidence" value="ECO:0007669"/>
    <property type="project" value="UniProtKB-SubCell"/>
</dbReference>
<dbReference type="GO" id="GO:0046930">
    <property type="term" value="C:pore complex"/>
    <property type="evidence" value="ECO:0007669"/>
    <property type="project" value="UniProtKB-KW"/>
</dbReference>
<dbReference type="GO" id="GO:0042958">
    <property type="term" value="F:maltodextrin transmembrane transporter activity"/>
    <property type="evidence" value="ECO:0007669"/>
    <property type="project" value="InterPro"/>
</dbReference>
<dbReference type="GO" id="GO:0015481">
    <property type="term" value="F:maltose transporting porin activity"/>
    <property type="evidence" value="ECO:0007669"/>
    <property type="project" value="InterPro"/>
</dbReference>
<dbReference type="GO" id="GO:0006811">
    <property type="term" value="P:monoatomic ion transport"/>
    <property type="evidence" value="ECO:0007669"/>
    <property type="project" value="UniProtKB-KW"/>
</dbReference>
<dbReference type="CDD" id="cd01346">
    <property type="entry name" value="Maltoporin-like"/>
    <property type="match status" value="1"/>
</dbReference>
<dbReference type="Gene3D" id="2.40.170.10">
    <property type="entry name" value="Porin, LamB type"/>
    <property type="match status" value="1"/>
</dbReference>
<dbReference type="HAMAP" id="MF_01301">
    <property type="entry name" value="LamB"/>
    <property type="match status" value="1"/>
</dbReference>
<dbReference type="InterPro" id="IPR050286">
    <property type="entry name" value="G_neg_Bact_CarbUptk_Porin"/>
</dbReference>
<dbReference type="InterPro" id="IPR023738">
    <property type="entry name" value="Maltoporin"/>
</dbReference>
<dbReference type="InterPro" id="IPR003192">
    <property type="entry name" value="Porin_LamB"/>
</dbReference>
<dbReference type="InterPro" id="IPR036998">
    <property type="entry name" value="Porin_LamB_sf"/>
</dbReference>
<dbReference type="NCBIfam" id="NF006860">
    <property type="entry name" value="PRK09360.1"/>
    <property type="match status" value="1"/>
</dbReference>
<dbReference type="PANTHER" id="PTHR38762">
    <property type="entry name" value="CRYPTIC OUTER MEMBRANE PORIN BGLH-RELATED"/>
    <property type="match status" value="1"/>
</dbReference>
<dbReference type="PANTHER" id="PTHR38762:SF1">
    <property type="entry name" value="CRYPTIC OUTER MEMBRANE PORIN BGLH-RELATED"/>
    <property type="match status" value="1"/>
</dbReference>
<dbReference type="Pfam" id="PF02264">
    <property type="entry name" value="LamB"/>
    <property type="match status" value="1"/>
</dbReference>
<dbReference type="SUPFAM" id="SSF56935">
    <property type="entry name" value="Porins"/>
    <property type="match status" value="1"/>
</dbReference>
<proteinExistence type="inferred from homology"/>
<feature type="signal peptide" evidence="1">
    <location>
        <begin position="1"/>
        <end position="21"/>
    </location>
</feature>
<feature type="chain" id="PRO_0000290221" description="Maltoporin">
    <location>
        <begin position="22"/>
        <end position="428"/>
    </location>
</feature>
<feature type="site" description="Greasy slide, important in sugar transport" evidence="1">
    <location>
        <position position="27"/>
    </location>
</feature>
<feature type="site" description="Greasy slide, important in sugar transport" evidence="1">
    <location>
        <position position="62"/>
    </location>
</feature>
<feature type="site" description="Greasy slide, important in sugar transport" evidence="1">
    <location>
        <position position="95"/>
    </location>
</feature>
<feature type="site" description="Important in sugar transport" evidence="1">
    <location>
        <position position="140"/>
    </location>
</feature>
<feature type="site" description="Greasy slide, important in sugar transport" evidence="1">
    <location>
        <position position="263"/>
    </location>
</feature>
<feature type="site" description="Greasy slide, important in sugar transport" evidence="1">
    <location>
        <position position="383"/>
    </location>
</feature>
<feature type="site" description="Greasy slide, important in sugar transport" evidence="1">
    <location>
        <position position="427"/>
    </location>
</feature>
<protein>
    <recommendedName>
        <fullName evidence="1">Maltoporin</fullName>
    </recommendedName>
    <alternativeName>
        <fullName evidence="1">Maltose-inducible porin</fullName>
    </alternativeName>
</protein>
<evidence type="ECO:0000255" key="1">
    <source>
        <dbReference type="HAMAP-Rule" id="MF_01301"/>
    </source>
</evidence>
<sequence length="428" mass="47895">MKKTLLAVAIGGAMFATSAAAVDFHGYARSGIGWTSGGGEQTALKVNGGGSKYRLGNETETYAEFKLGQELFKDGNKSIYLDSNIAYSIDQQVDWEATDPAFREINVQFKNFAEDLLPGATLWAGKRFYQRHDVHMNDFYYWDISGPGAGVENIDLGFGKLSLAVTRNTEGGGTATYGQDKVYYIDNNGQIQYRYEDRKADVYNDVFDIRLAELNVNPNGKLEIGFDYGNAHTKNGYHLEPGASKNGYMITLEHTQGEFFGGFNKFVAQYATDSMTSWNTGHSQGGSVNNNGDMLRLIDHGVVQFSPKVEMMYALIYEKTDLDNNQGKTWYSAGIRPMYKWNKTMSTLLEVGYDRIKEQSSGKKNDLAKVTLAQQWQAGDSIWARPAIRVFGTYGHWNDKFNITDRTNAGYKAKDAEFVAGVQFEAWW</sequence>
<keyword id="KW-0998">Cell outer membrane</keyword>
<keyword id="KW-0406">Ion transport</keyword>
<keyword id="KW-0472">Membrane</keyword>
<keyword id="KW-0626">Porin</keyword>
<keyword id="KW-0732">Signal</keyword>
<keyword id="KW-0762">Sugar transport</keyword>
<keyword id="KW-0812">Transmembrane</keyword>
<keyword id="KW-1134">Transmembrane beta strand</keyword>
<keyword id="KW-0813">Transport</keyword>
<organism>
    <name type="scientific">Mannheimia succiniciproducens (strain KCTC 0769BP / MBEL55E)</name>
    <dbReference type="NCBI Taxonomy" id="221988"/>
    <lineage>
        <taxon>Bacteria</taxon>
        <taxon>Pseudomonadati</taxon>
        <taxon>Pseudomonadota</taxon>
        <taxon>Gammaproteobacteria</taxon>
        <taxon>Pasteurellales</taxon>
        <taxon>Pasteurellaceae</taxon>
        <taxon>Basfia</taxon>
    </lineage>
</organism>
<comment type="function">
    <text evidence="1">Involved in the transport of maltose and maltodextrins.</text>
</comment>
<comment type="catalytic activity">
    <reaction evidence="1">
        <text>beta-maltose(in) = beta-maltose(out)</text>
        <dbReference type="Rhea" id="RHEA:29731"/>
        <dbReference type="ChEBI" id="CHEBI:18147"/>
    </reaction>
</comment>
<comment type="subunit">
    <text evidence="1">Homotrimer formed of three 18-stranded antiparallel beta-barrels, containing three independent channels.</text>
</comment>
<comment type="subcellular location">
    <subcellularLocation>
        <location evidence="1">Cell outer membrane</location>
        <topology evidence="1">Multi-pass membrane protein</topology>
    </subcellularLocation>
</comment>
<comment type="induction">
    <text evidence="1">By maltose.</text>
</comment>
<comment type="similarity">
    <text evidence="1">Belongs to the porin LamB (TC 1.B.3) family.</text>
</comment>